<accession>Q289M5</accession>
<gene>
    <name evidence="1" type="primary">M</name>
</gene>
<organism>
    <name type="scientific">Influenza A virus (strain A/New Zealand:South Canterbury/35/2000 H1N1)</name>
    <dbReference type="NCBI Taxonomy" id="363066"/>
    <lineage>
        <taxon>Viruses</taxon>
        <taxon>Riboviria</taxon>
        <taxon>Orthornavirae</taxon>
        <taxon>Negarnaviricota</taxon>
        <taxon>Polyploviricotina</taxon>
        <taxon>Insthoviricetes</taxon>
        <taxon>Articulavirales</taxon>
        <taxon>Orthomyxoviridae</taxon>
        <taxon>Alphainfluenzavirus</taxon>
        <taxon>Alphainfluenzavirus influenzae</taxon>
        <taxon>Influenza A virus</taxon>
    </lineage>
</organism>
<feature type="chain" id="PRO_0000372899" description="Matrix protein 1">
    <location>
        <begin position="1"/>
        <end position="252"/>
    </location>
</feature>
<feature type="region of interest" description="Membrane-binding" evidence="1">
    <location>
        <begin position="1"/>
        <end position="164"/>
    </location>
</feature>
<feature type="region of interest" description="RNP-binding" evidence="1">
    <location>
        <begin position="165"/>
        <end position="252"/>
    </location>
</feature>
<feature type="short sequence motif" description="Nuclear localization signal" evidence="1">
    <location>
        <begin position="101"/>
        <end position="105"/>
    </location>
</feature>
<keyword id="KW-0025">Alternative splicing</keyword>
<keyword id="KW-1048">Host nucleus</keyword>
<keyword id="KW-0472">Membrane</keyword>
<keyword id="KW-0694">RNA-binding</keyword>
<keyword id="KW-0468">Viral matrix protein</keyword>
<keyword id="KW-0946">Virion</keyword>
<organismHost>
    <name type="scientific">Aves</name>
    <dbReference type="NCBI Taxonomy" id="8782"/>
</organismHost>
<organismHost>
    <name type="scientific">Homo sapiens</name>
    <name type="common">Human</name>
    <dbReference type="NCBI Taxonomy" id="9606"/>
</organismHost>
<organismHost>
    <name type="scientific">Sus scrofa</name>
    <name type="common">Pig</name>
    <dbReference type="NCBI Taxonomy" id="9823"/>
</organismHost>
<protein>
    <recommendedName>
        <fullName evidence="1">Matrix protein 1</fullName>
        <shortName evidence="1">M1</shortName>
    </recommendedName>
</protein>
<name>M1_I00A1</name>
<comment type="function">
    <text evidence="1">Plays critical roles in virus replication, from virus entry and uncoating to assembly and budding of the virus particle. M1 binding to ribonucleocapsids (RNPs) in nucleus seems to inhibit viral transcription. Interaction of viral NEP with M1-RNP is thought to promote nuclear export of the complex, which is targeted to the virion assembly site at the apical plasma membrane in polarized epithelial cells. Interactions with NA and HA may bring M1, a non-raft-associated protein, into lipid rafts. Forms a continuous shell on the inner side of the lipid bilayer in virion, where it binds the RNP. During virus entry into cell, the M2 ion channel acidifies the internal virion core, inducing M1 dissociation from the RNP. M1-free RNPs are transported to the nucleus, where viral transcription and replication can take place.</text>
</comment>
<comment type="function">
    <text evidence="1">Determines the virion's shape: spherical or filamentous. Clinical isolates of influenza are characterized by the presence of significant proportion of filamentous virions, whereas after multiple passage on eggs or cell culture, virions have only spherical morphology. Filamentous virions are thought to be important to infect neighboring cells, and spherical virions more suited to spread through aerosol between hosts organisms.</text>
</comment>
<comment type="subunit">
    <text evidence="1">Homodimer and homomultimer. Interacts with NEP. Binds ribonucleocapsid by both interacting with genomic RNA and NP protein. May interact with HA and NA. Cannot bind NP without genomic RNA.</text>
</comment>
<comment type="subcellular location">
    <subcellularLocation>
        <location evidence="1">Virion membrane</location>
        <topology evidence="1">Peripheral membrane protein</topology>
        <orientation evidence="1">Cytoplasmic side</orientation>
    </subcellularLocation>
    <subcellularLocation>
        <location evidence="1">Host nucleus</location>
    </subcellularLocation>
</comment>
<comment type="alternative products">
    <event type="alternative splicing"/>
    <isoform>
        <id>Q289M5-1</id>
        <name>M1</name>
        <sequence type="displayed"/>
    </isoform>
    <isoform>
        <id>Q289M6-1</id>
        <name>M2</name>
        <sequence type="external"/>
    </isoform>
    <text>Only the first 9 residues are shared by the 2 isoforms.</text>
</comment>
<comment type="miscellaneous">
    <text evidence="1">Most abundant protein in virion. When expressed alone can form virus-like particles in transfected cells.</text>
</comment>
<comment type="similarity">
    <text evidence="1">Belongs to the influenza viruses Matrix protein M1 family.</text>
</comment>
<proteinExistence type="inferred from homology"/>
<reference key="1">
    <citation type="submission" date="2006-03" db="EMBL/GenBank/DDBJ databases">
        <title>The NIAID influenza genome sequencing project.</title>
        <authorList>
            <person name="Ghedin E."/>
            <person name="Spiro D."/>
            <person name="Sengamalay N."/>
            <person name="Zaborsky J."/>
            <person name="Feldblyum T."/>
            <person name="Subbu V."/>
            <person name="Sparenborg J."/>
            <person name="Groveman L."/>
            <person name="Halpin R."/>
            <person name="Shumway M."/>
            <person name="Sitz J."/>
            <person name="Katzel D."/>
            <person name="Koo H."/>
            <person name="Salzberg S.L."/>
            <person name="Jennings L."/>
            <person name="Smit M."/>
            <person name="Wells V."/>
            <person name="Bao Y."/>
            <person name="Bolotov P."/>
            <person name="Dernovoy D."/>
            <person name="Kiryutin B."/>
            <person name="Lipman D.J."/>
            <person name="Tatusova T."/>
        </authorList>
    </citation>
    <scope>NUCLEOTIDE SEQUENCE [GENOMIC RNA]</scope>
</reference>
<reference key="2">
    <citation type="submission" date="2006-03" db="EMBL/GenBank/DDBJ databases">
        <authorList>
            <consortium name="The NIAID Influenza Genome Sequencing Consortium"/>
        </authorList>
    </citation>
    <scope>NUCLEOTIDE SEQUENCE [GENOMIC RNA]</scope>
</reference>
<sequence length="252" mass="27837">MSLLTEVETYVLSIVPSGPLKAEIAQRLEDVFAGKNTDLEALMEWLKTRPILSPLTKGILGFVFTLTVPSERGLQRRRFVQNALNGNGDPNNMDRAVKLYRKLKREITFHGAKEIALSYSAGALASCMGLIYNRMGAVTTESAFGLICATCEQIADSQHKSHRQMVTTTNPLIRHENRMVLASTTAKAMEQMAGSSEQAAEAMEVASQARQMVQAMRAIGTHPSSSTGLKNDLLENLQAYQKRMGVQMQRFK</sequence>
<evidence type="ECO:0000255" key="1">
    <source>
        <dbReference type="HAMAP-Rule" id="MF_04068"/>
    </source>
</evidence>
<dbReference type="EMBL" id="CY009205">
    <property type="protein sequence ID" value="ABD61519.1"/>
    <property type="molecule type" value="Genomic_RNA"/>
</dbReference>
<dbReference type="SMR" id="Q289M5"/>
<dbReference type="Proteomes" id="UP001366552">
    <property type="component" value="Genome"/>
</dbReference>
<dbReference type="GO" id="GO:0042025">
    <property type="term" value="C:host cell nucleus"/>
    <property type="evidence" value="ECO:0007669"/>
    <property type="project" value="UniProtKB-SubCell"/>
</dbReference>
<dbReference type="GO" id="GO:0016020">
    <property type="term" value="C:membrane"/>
    <property type="evidence" value="ECO:0007669"/>
    <property type="project" value="UniProtKB-KW"/>
</dbReference>
<dbReference type="GO" id="GO:0055036">
    <property type="term" value="C:virion membrane"/>
    <property type="evidence" value="ECO:0007669"/>
    <property type="project" value="UniProtKB-SubCell"/>
</dbReference>
<dbReference type="GO" id="GO:0003723">
    <property type="term" value="F:RNA binding"/>
    <property type="evidence" value="ECO:0007669"/>
    <property type="project" value="UniProtKB-UniRule"/>
</dbReference>
<dbReference type="GO" id="GO:0039660">
    <property type="term" value="F:structural constituent of virion"/>
    <property type="evidence" value="ECO:0007669"/>
    <property type="project" value="UniProtKB-UniRule"/>
</dbReference>
<dbReference type="GO" id="GO:0046761">
    <property type="term" value="P:viral budding from plasma membrane"/>
    <property type="evidence" value="ECO:0007669"/>
    <property type="project" value="UniProtKB-UniRule"/>
</dbReference>
<dbReference type="FunFam" id="1.10.10.180:FF:000001">
    <property type="entry name" value="Matrix protein 1"/>
    <property type="match status" value="1"/>
</dbReference>
<dbReference type="FunFam" id="1.20.91.10:FF:000001">
    <property type="entry name" value="Matrix protein 1"/>
    <property type="match status" value="1"/>
</dbReference>
<dbReference type="Gene3D" id="1.10.10.180">
    <property type="match status" value="1"/>
</dbReference>
<dbReference type="Gene3D" id="1.20.91.10">
    <property type="match status" value="1"/>
</dbReference>
<dbReference type="HAMAP" id="MF_04068">
    <property type="entry name" value="INFV_M1"/>
    <property type="match status" value="1"/>
</dbReference>
<dbReference type="InterPro" id="IPR036039">
    <property type="entry name" value="Flu_matrix_M1"/>
</dbReference>
<dbReference type="InterPro" id="IPR013188">
    <property type="entry name" value="Flu_matrix_M1_C"/>
</dbReference>
<dbReference type="InterPro" id="IPR001561">
    <property type="entry name" value="Flu_matrix_M1_N"/>
</dbReference>
<dbReference type="InterPro" id="IPR015423">
    <property type="entry name" value="Flu_matrix_M1_N_sub1"/>
</dbReference>
<dbReference type="InterPro" id="IPR015799">
    <property type="entry name" value="Flu_matrix_M1_N_sub2"/>
</dbReference>
<dbReference type="InterPro" id="IPR037533">
    <property type="entry name" value="INFV_M1"/>
</dbReference>
<dbReference type="Pfam" id="PF00598">
    <property type="entry name" value="Flu_M1"/>
    <property type="match status" value="1"/>
</dbReference>
<dbReference type="Pfam" id="PF08289">
    <property type="entry name" value="Flu_M1_C"/>
    <property type="match status" value="1"/>
</dbReference>
<dbReference type="SMART" id="SM00759">
    <property type="entry name" value="Flu_M1_C"/>
    <property type="match status" value="1"/>
</dbReference>
<dbReference type="SUPFAM" id="SSF48145">
    <property type="entry name" value="Influenza virus matrix protein M1"/>
    <property type="match status" value="1"/>
</dbReference>